<feature type="chain" id="PRO_1000084592" description="tRNA pseudouridine synthase B">
    <location>
        <begin position="1"/>
        <end position="302"/>
    </location>
</feature>
<feature type="active site" description="Nucleophile" evidence="1">
    <location>
        <position position="45"/>
    </location>
</feature>
<organism>
    <name type="scientific">Francisella philomiragia subsp. philomiragia (strain ATCC 25017 / CCUG 19701 / FSC 153 / O#319-036)</name>
    <dbReference type="NCBI Taxonomy" id="484022"/>
    <lineage>
        <taxon>Bacteria</taxon>
        <taxon>Pseudomonadati</taxon>
        <taxon>Pseudomonadota</taxon>
        <taxon>Gammaproteobacteria</taxon>
        <taxon>Thiotrichales</taxon>
        <taxon>Francisellaceae</taxon>
        <taxon>Francisella</taxon>
    </lineage>
</organism>
<evidence type="ECO:0000255" key="1">
    <source>
        <dbReference type="HAMAP-Rule" id="MF_01080"/>
    </source>
</evidence>
<proteinExistence type="inferred from homology"/>
<keyword id="KW-0413">Isomerase</keyword>
<keyword id="KW-0819">tRNA processing</keyword>
<protein>
    <recommendedName>
        <fullName evidence="1">tRNA pseudouridine synthase B</fullName>
        <ecNumber evidence="1">5.4.99.25</ecNumber>
    </recommendedName>
    <alternativeName>
        <fullName evidence="1">tRNA pseudouridine(55) synthase</fullName>
        <shortName evidence="1">Psi55 synthase</shortName>
    </alternativeName>
    <alternativeName>
        <fullName evidence="1">tRNA pseudouridylate synthase</fullName>
    </alternativeName>
    <alternativeName>
        <fullName evidence="1">tRNA-uridine isomerase</fullName>
    </alternativeName>
</protein>
<sequence length="302" mass="33711">MKKNRLNLNGVVVINKTQGLSSNKVLQKLKYLFNAQKAGHTGTLDPMATGVLPICFGRATKIAQYLLDSDKEYIATIKLGIETDSGDAEGEIIAKNADIPELTVEYLETVLAKFRGDIVQIPPMYSALKHNGQPLYKLAREGKAIEVKPRNINIYELELLEFNTDSLKIRVKCSKGTYIRSLAIDIGKALGCGGHLIALQRTQSGPFRIETALDLDNLKDLSFEQKLASIASVESVFIDKPIYSLVEEEKDDLYKRGLFADKSHLDGTVRIYDDEKFVAIAEFDKGKLISKKFFDQDIFISE</sequence>
<name>TRUB_FRAP2</name>
<gene>
    <name evidence="1" type="primary">truB</name>
    <name type="ordered locus">Fphi_1212</name>
</gene>
<dbReference type="EC" id="5.4.99.25" evidence="1"/>
<dbReference type="EMBL" id="CP000937">
    <property type="protein sequence ID" value="ABZ87437.1"/>
    <property type="molecule type" value="Genomic_DNA"/>
</dbReference>
<dbReference type="SMR" id="B0TXH9"/>
<dbReference type="KEGG" id="fph:Fphi_1212"/>
<dbReference type="eggNOG" id="COG0130">
    <property type="taxonomic scope" value="Bacteria"/>
</dbReference>
<dbReference type="HOGENOM" id="CLU_032087_0_3_6"/>
<dbReference type="GO" id="GO:0003723">
    <property type="term" value="F:RNA binding"/>
    <property type="evidence" value="ECO:0007669"/>
    <property type="project" value="InterPro"/>
</dbReference>
<dbReference type="GO" id="GO:0160148">
    <property type="term" value="F:tRNA pseudouridine(55) synthase activity"/>
    <property type="evidence" value="ECO:0007669"/>
    <property type="project" value="UniProtKB-EC"/>
</dbReference>
<dbReference type="GO" id="GO:1990481">
    <property type="term" value="P:mRNA pseudouridine synthesis"/>
    <property type="evidence" value="ECO:0007669"/>
    <property type="project" value="TreeGrafter"/>
</dbReference>
<dbReference type="GO" id="GO:0031119">
    <property type="term" value="P:tRNA pseudouridine synthesis"/>
    <property type="evidence" value="ECO:0007669"/>
    <property type="project" value="UniProtKB-UniRule"/>
</dbReference>
<dbReference type="CDD" id="cd02573">
    <property type="entry name" value="PseudoU_synth_EcTruB"/>
    <property type="match status" value="1"/>
</dbReference>
<dbReference type="FunFam" id="3.30.2350.10:FF:000011">
    <property type="entry name" value="tRNA pseudouridine synthase B"/>
    <property type="match status" value="1"/>
</dbReference>
<dbReference type="Gene3D" id="3.30.2350.10">
    <property type="entry name" value="Pseudouridine synthase"/>
    <property type="match status" value="1"/>
</dbReference>
<dbReference type="HAMAP" id="MF_01080">
    <property type="entry name" value="TruB_bact"/>
    <property type="match status" value="1"/>
</dbReference>
<dbReference type="InterPro" id="IPR020103">
    <property type="entry name" value="PsdUridine_synth_cat_dom_sf"/>
</dbReference>
<dbReference type="InterPro" id="IPR002501">
    <property type="entry name" value="PsdUridine_synth_N"/>
</dbReference>
<dbReference type="InterPro" id="IPR014780">
    <property type="entry name" value="tRNA_psdUridine_synth_TruB"/>
</dbReference>
<dbReference type="InterPro" id="IPR032819">
    <property type="entry name" value="TruB_C"/>
</dbReference>
<dbReference type="NCBIfam" id="TIGR00431">
    <property type="entry name" value="TruB"/>
    <property type="match status" value="1"/>
</dbReference>
<dbReference type="PANTHER" id="PTHR13767:SF2">
    <property type="entry name" value="PSEUDOURIDYLATE SYNTHASE TRUB1"/>
    <property type="match status" value="1"/>
</dbReference>
<dbReference type="PANTHER" id="PTHR13767">
    <property type="entry name" value="TRNA-PSEUDOURIDINE SYNTHASE"/>
    <property type="match status" value="1"/>
</dbReference>
<dbReference type="Pfam" id="PF16198">
    <property type="entry name" value="TruB_C_2"/>
    <property type="match status" value="1"/>
</dbReference>
<dbReference type="Pfam" id="PF01509">
    <property type="entry name" value="TruB_N"/>
    <property type="match status" value="1"/>
</dbReference>
<dbReference type="SUPFAM" id="SSF55120">
    <property type="entry name" value="Pseudouridine synthase"/>
    <property type="match status" value="1"/>
</dbReference>
<reference key="1">
    <citation type="submission" date="2007-12" db="EMBL/GenBank/DDBJ databases">
        <title>Complete sequence of chromosome of Francisella philomiragia subsp. philomiragia ATCC 25017.</title>
        <authorList>
            <consortium name="US DOE Joint Genome Institute"/>
            <person name="Copeland A."/>
            <person name="Lucas S."/>
            <person name="Lapidus A."/>
            <person name="Barry K."/>
            <person name="Detter J.C."/>
            <person name="Glavina del Rio T."/>
            <person name="Hammon N."/>
            <person name="Israni S."/>
            <person name="Dalin E."/>
            <person name="Tice H."/>
            <person name="Pitluck S."/>
            <person name="Chain P."/>
            <person name="Malfatti S."/>
            <person name="Shin M."/>
            <person name="Vergez L."/>
            <person name="Schmutz J."/>
            <person name="Larimer F."/>
            <person name="Land M."/>
            <person name="Hauser L."/>
            <person name="Richardson P."/>
        </authorList>
    </citation>
    <scope>NUCLEOTIDE SEQUENCE [LARGE SCALE GENOMIC DNA]</scope>
    <source>
        <strain>ATCC 25017 / CCUG 19701 / FSC 153 / O#319-036</strain>
    </source>
</reference>
<accession>B0TXH9</accession>
<comment type="function">
    <text evidence="1">Responsible for synthesis of pseudouridine from uracil-55 in the psi GC loop of transfer RNAs.</text>
</comment>
<comment type="catalytic activity">
    <reaction evidence="1">
        <text>uridine(55) in tRNA = pseudouridine(55) in tRNA</text>
        <dbReference type="Rhea" id="RHEA:42532"/>
        <dbReference type="Rhea" id="RHEA-COMP:10101"/>
        <dbReference type="Rhea" id="RHEA-COMP:10102"/>
        <dbReference type="ChEBI" id="CHEBI:65314"/>
        <dbReference type="ChEBI" id="CHEBI:65315"/>
        <dbReference type="EC" id="5.4.99.25"/>
    </reaction>
</comment>
<comment type="similarity">
    <text evidence="1">Belongs to the pseudouridine synthase TruB family. Type 1 subfamily.</text>
</comment>